<name>PIMT_PSEE4</name>
<evidence type="ECO:0000255" key="1">
    <source>
        <dbReference type="HAMAP-Rule" id="MF_00090"/>
    </source>
</evidence>
<evidence type="ECO:0000305" key="2"/>
<gene>
    <name evidence="1" type="primary">pcm</name>
    <name type="ordered locus">PSEEN4191</name>
</gene>
<reference key="1">
    <citation type="journal article" date="2006" name="Nat. Biotechnol.">
        <title>Complete genome sequence of the entomopathogenic and metabolically versatile soil bacterium Pseudomonas entomophila.</title>
        <authorList>
            <person name="Vodovar N."/>
            <person name="Vallenet D."/>
            <person name="Cruveiller S."/>
            <person name="Rouy Z."/>
            <person name="Barbe V."/>
            <person name="Acosta C."/>
            <person name="Cattolico L."/>
            <person name="Jubin C."/>
            <person name="Lajus A."/>
            <person name="Segurens B."/>
            <person name="Vacherie B."/>
            <person name="Wincker P."/>
            <person name="Weissenbach J."/>
            <person name="Lemaitre B."/>
            <person name="Medigue C."/>
            <person name="Boccard F."/>
        </authorList>
    </citation>
    <scope>NUCLEOTIDE SEQUENCE [LARGE SCALE GENOMIC DNA]</scope>
    <source>
        <strain>L48</strain>
    </source>
</reference>
<sequence length="212" mass="23506">MTSQRTRERLIQRLYEEGVSNAKVLEVIRKTPRHLFVDEALAHRAYEDTALPIGHNQTISQPFMVAHMSELLLEAGPLDKVLEIGTGSGYQTAILAQLVERVFSVERIKVLQDRAKERLVELNLRNVVFRWGDGCEGWPALAPYNGIIVTAVAPEVPQALLDQLAPGGRMVIPVGPAGETQQLMLIVREEQGFSRRVLGAVRFVPLLNGPLA</sequence>
<feature type="chain" id="PRO_0000351906" description="Protein-L-isoaspartate O-methyltransferase">
    <location>
        <begin position="1"/>
        <end position="212"/>
    </location>
</feature>
<feature type="active site" evidence="1">
    <location>
        <position position="60"/>
    </location>
</feature>
<proteinExistence type="inferred from homology"/>
<organism>
    <name type="scientific">Pseudomonas entomophila (strain L48)</name>
    <dbReference type="NCBI Taxonomy" id="384676"/>
    <lineage>
        <taxon>Bacteria</taxon>
        <taxon>Pseudomonadati</taxon>
        <taxon>Pseudomonadota</taxon>
        <taxon>Gammaproteobacteria</taxon>
        <taxon>Pseudomonadales</taxon>
        <taxon>Pseudomonadaceae</taxon>
        <taxon>Pseudomonas</taxon>
    </lineage>
</organism>
<comment type="function">
    <text evidence="1">Catalyzes the methyl esterification of L-isoaspartyl residues in peptides and proteins that result from spontaneous decomposition of normal L-aspartyl and L-asparaginyl residues. It plays a role in the repair and/or degradation of damaged proteins.</text>
</comment>
<comment type="catalytic activity">
    <reaction evidence="1">
        <text>[protein]-L-isoaspartate + S-adenosyl-L-methionine = [protein]-L-isoaspartate alpha-methyl ester + S-adenosyl-L-homocysteine</text>
        <dbReference type="Rhea" id="RHEA:12705"/>
        <dbReference type="Rhea" id="RHEA-COMP:12143"/>
        <dbReference type="Rhea" id="RHEA-COMP:12144"/>
        <dbReference type="ChEBI" id="CHEBI:57856"/>
        <dbReference type="ChEBI" id="CHEBI:59789"/>
        <dbReference type="ChEBI" id="CHEBI:90596"/>
        <dbReference type="ChEBI" id="CHEBI:90598"/>
        <dbReference type="EC" id="2.1.1.77"/>
    </reaction>
</comment>
<comment type="subcellular location">
    <subcellularLocation>
        <location evidence="1">Cytoplasm</location>
    </subcellularLocation>
</comment>
<comment type="similarity">
    <text evidence="1">Belongs to the methyltransferase superfamily. L-isoaspartyl/D-aspartyl protein methyltransferase family.</text>
</comment>
<comment type="sequence caution" evidence="2">
    <conflict type="erroneous initiation">
        <sequence resource="EMBL-CDS" id="CAK16880"/>
    </conflict>
</comment>
<accession>Q1I655</accession>
<protein>
    <recommendedName>
        <fullName evidence="1">Protein-L-isoaspartate O-methyltransferase</fullName>
        <ecNumber evidence="1">2.1.1.77</ecNumber>
    </recommendedName>
    <alternativeName>
        <fullName evidence="1">L-isoaspartyl protein carboxyl methyltransferase</fullName>
    </alternativeName>
    <alternativeName>
        <fullName evidence="1">Protein L-isoaspartyl methyltransferase</fullName>
    </alternativeName>
    <alternativeName>
        <fullName evidence="1">Protein-beta-aspartate methyltransferase</fullName>
        <shortName evidence="1">PIMT</shortName>
    </alternativeName>
</protein>
<keyword id="KW-0963">Cytoplasm</keyword>
<keyword id="KW-0489">Methyltransferase</keyword>
<keyword id="KW-0949">S-adenosyl-L-methionine</keyword>
<keyword id="KW-0808">Transferase</keyword>
<dbReference type="EC" id="2.1.1.77" evidence="1"/>
<dbReference type="EMBL" id="CT573326">
    <property type="protein sequence ID" value="CAK16880.1"/>
    <property type="status" value="ALT_INIT"/>
    <property type="molecule type" value="Genomic_DNA"/>
</dbReference>
<dbReference type="SMR" id="Q1I655"/>
<dbReference type="STRING" id="384676.PSEEN4191"/>
<dbReference type="KEGG" id="pen:PSEEN4191"/>
<dbReference type="eggNOG" id="COG2518">
    <property type="taxonomic scope" value="Bacteria"/>
</dbReference>
<dbReference type="HOGENOM" id="CLU_055432_2_0_6"/>
<dbReference type="Proteomes" id="UP000000658">
    <property type="component" value="Chromosome"/>
</dbReference>
<dbReference type="GO" id="GO:0005737">
    <property type="term" value="C:cytoplasm"/>
    <property type="evidence" value="ECO:0007669"/>
    <property type="project" value="UniProtKB-SubCell"/>
</dbReference>
<dbReference type="GO" id="GO:0004719">
    <property type="term" value="F:protein-L-isoaspartate (D-aspartate) O-methyltransferase activity"/>
    <property type="evidence" value="ECO:0007669"/>
    <property type="project" value="UniProtKB-UniRule"/>
</dbReference>
<dbReference type="GO" id="GO:0032259">
    <property type="term" value="P:methylation"/>
    <property type="evidence" value="ECO:0007669"/>
    <property type="project" value="UniProtKB-KW"/>
</dbReference>
<dbReference type="GO" id="GO:0036211">
    <property type="term" value="P:protein modification process"/>
    <property type="evidence" value="ECO:0007669"/>
    <property type="project" value="UniProtKB-UniRule"/>
</dbReference>
<dbReference type="GO" id="GO:0030091">
    <property type="term" value="P:protein repair"/>
    <property type="evidence" value="ECO:0007669"/>
    <property type="project" value="UniProtKB-UniRule"/>
</dbReference>
<dbReference type="CDD" id="cd02440">
    <property type="entry name" value="AdoMet_MTases"/>
    <property type="match status" value="1"/>
</dbReference>
<dbReference type="FunFam" id="3.40.50.150:FF:000010">
    <property type="entry name" value="Protein-L-isoaspartate O-methyltransferase"/>
    <property type="match status" value="1"/>
</dbReference>
<dbReference type="Gene3D" id="3.40.50.150">
    <property type="entry name" value="Vaccinia Virus protein VP39"/>
    <property type="match status" value="1"/>
</dbReference>
<dbReference type="HAMAP" id="MF_00090">
    <property type="entry name" value="PIMT"/>
    <property type="match status" value="1"/>
</dbReference>
<dbReference type="InterPro" id="IPR000682">
    <property type="entry name" value="PCMT"/>
</dbReference>
<dbReference type="InterPro" id="IPR029063">
    <property type="entry name" value="SAM-dependent_MTases_sf"/>
</dbReference>
<dbReference type="NCBIfam" id="TIGR00080">
    <property type="entry name" value="pimt"/>
    <property type="match status" value="1"/>
</dbReference>
<dbReference type="NCBIfam" id="NF001453">
    <property type="entry name" value="PRK00312.1"/>
    <property type="match status" value="1"/>
</dbReference>
<dbReference type="PANTHER" id="PTHR11579">
    <property type="entry name" value="PROTEIN-L-ISOASPARTATE O-METHYLTRANSFERASE"/>
    <property type="match status" value="1"/>
</dbReference>
<dbReference type="PANTHER" id="PTHR11579:SF0">
    <property type="entry name" value="PROTEIN-L-ISOASPARTATE(D-ASPARTATE) O-METHYLTRANSFERASE"/>
    <property type="match status" value="1"/>
</dbReference>
<dbReference type="Pfam" id="PF01135">
    <property type="entry name" value="PCMT"/>
    <property type="match status" value="1"/>
</dbReference>
<dbReference type="SUPFAM" id="SSF53335">
    <property type="entry name" value="S-adenosyl-L-methionine-dependent methyltransferases"/>
    <property type="match status" value="1"/>
</dbReference>
<dbReference type="PROSITE" id="PS01279">
    <property type="entry name" value="PCMT"/>
    <property type="match status" value="1"/>
</dbReference>